<reference key="1">
    <citation type="journal article" date="2014" name="Stand. Genomic Sci.">
        <title>Complete genome sequence of Burkholderia phymatum STM815(T), a broad host range and efficient nitrogen-fixing symbiont of Mimosa species.</title>
        <authorList>
            <person name="Moulin L."/>
            <person name="Klonowska A."/>
            <person name="Caroline B."/>
            <person name="Booth K."/>
            <person name="Vriezen J.A."/>
            <person name="Melkonian R."/>
            <person name="James E.K."/>
            <person name="Young J.P."/>
            <person name="Bena G."/>
            <person name="Hauser L."/>
            <person name="Land M."/>
            <person name="Kyrpides N."/>
            <person name="Bruce D."/>
            <person name="Chain P."/>
            <person name="Copeland A."/>
            <person name="Pitluck S."/>
            <person name="Woyke T."/>
            <person name="Lizotte-Waniewski M."/>
            <person name="Bristow J."/>
            <person name="Riley M."/>
        </authorList>
    </citation>
    <scope>NUCLEOTIDE SEQUENCE [LARGE SCALE GENOMIC DNA]</scope>
    <source>
        <strain>DSM 17167 / CIP 108236 / LMG 21445 / STM815</strain>
    </source>
</reference>
<accession>B2JHX9</accession>
<feature type="chain" id="PRO_1000134975" description="Imidazole glycerol phosphate synthase subunit HisF">
    <location>
        <begin position="1"/>
        <end position="257"/>
    </location>
</feature>
<feature type="active site" evidence="1">
    <location>
        <position position="12"/>
    </location>
</feature>
<feature type="active site" evidence="1">
    <location>
        <position position="131"/>
    </location>
</feature>
<protein>
    <recommendedName>
        <fullName evidence="1">Imidazole glycerol phosphate synthase subunit HisF</fullName>
        <ecNumber evidence="1">4.3.2.10</ecNumber>
    </recommendedName>
    <alternativeName>
        <fullName evidence="1">IGP synthase cyclase subunit</fullName>
    </alternativeName>
    <alternativeName>
        <fullName evidence="1">IGP synthase subunit HisF</fullName>
    </alternativeName>
    <alternativeName>
        <fullName evidence="1">ImGP synthase subunit HisF</fullName>
        <shortName evidence="1">IGPS subunit HisF</shortName>
    </alternativeName>
</protein>
<dbReference type="EC" id="4.3.2.10" evidence="1"/>
<dbReference type="EMBL" id="CP001043">
    <property type="protein sequence ID" value="ACC71925.1"/>
    <property type="molecule type" value="Genomic_DNA"/>
</dbReference>
<dbReference type="RefSeq" id="WP_012402123.1">
    <property type="nucleotide sequence ID" value="NC_010622.1"/>
</dbReference>
<dbReference type="SMR" id="B2JHX9"/>
<dbReference type="STRING" id="391038.Bphy_2753"/>
<dbReference type="KEGG" id="bph:Bphy_2753"/>
<dbReference type="eggNOG" id="COG0107">
    <property type="taxonomic scope" value="Bacteria"/>
</dbReference>
<dbReference type="HOGENOM" id="CLU_048577_4_0_4"/>
<dbReference type="OrthoDB" id="9781903at2"/>
<dbReference type="UniPathway" id="UPA00031">
    <property type="reaction ID" value="UER00010"/>
</dbReference>
<dbReference type="Proteomes" id="UP000001192">
    <property type="component" value="Chromosome 1"/>
</dbReference>
<dbReference type="GO" id="GO:0005737">
    <property type="term" value="C:cytoplasm"/>
    <property type="evidence" value="ECO:0007669"/>
    <property type="project" value="UniProtKB-SubCell"/>
</dbReference>
<dbReference type="GO" id="GO:0000107">
    <property type="term" value="F:imidazoleglycerol-phosphate synthase activity"/>
    <property type="evidence" value="ECO:0007669"/>
    <property type="project" value="UniProtKB-UniRule"/>
</dbReference>
<dbReference type="GO" id="GO:0016829">
    <property type="term" value="F:lyase activity"/>
    <property type="evidence" value="ECO:0007669"/>
    <property type="project" value="UniProtKB-KW"/>
</dbReference>
<dbReference type="GO" id="GO:0000105">
    <property type="term" value="P:L-histidine biosynthetic process"/>
    <property type="evidence" value="ECO:0007669"/>
    <property type="project" value="UniProtKB-UniRule"/>
</dbReference>
<dbReference type="CDD" id="cd04731">
    <property type="entry name" value="HisF"/>
    <property type="match status" value="1"/>
</dbReference>
<dbReference type="FunFam" id="3.20.20.70:FF:000006">
    <property type="entry name" value="Imidazole glycerol phosphate synthase subunit HisF"/>
    <property type="match status" value="1"/>
</dbReference>
<dbReference type="Gene3D" id="3.20.20.70">
    <property type="entry name" value="Aldolase class I"/>
    <property type="match status" value="1"/>
</dbReference>
<dbReference type="HAMAP" id="MF_01013">
    <property type="entry name" value="HisF"/>
    <property type="match status" value="1"/>
</dbReference>
<dbReference type="InterPro" id="IPR013785">
    <property type="entry name" value="Aldolase_TIM"/>
</dbReference>
<dbReference type="InterPro" id="IPR006062">
    <property type="entry name" value="His_biosynth"/>
</dbReference>
<dbReference type="InterPro" id="IPR004651">
    <property type="entry name" value="HisF"/>
</dbReference>
<dbReference type="InterPro" id="IPR050064">
    <property type="entry name" value="IGPS_HisA/HisF"/>
</dbReference>
<dbReference type="InterPro" id="IPR011060">
    <property type="entry name" value="RibuloseP-bd_barrel"/>
</dbReference>
<dbReference type="NCBIfam" id="TIGR00735">
    <property type="entry name" value="hisF"/>
    <property type="match status" value="1"/>
</dbReference>
<dbReference type="PANTHER" id="PTHR21235:SF2">
    <property type="entry name" value="IMIDAZOLE GLYCEROL PHOSPHATE SYNTHASE HISHF"/>
    <property type="match status" value="1"/>
</dbReference>
<dbReference type="PANTHER" id="PTHR21235">
    <property type="entry name" value="IMIDAZOLE GLYCEROL PHOSPHATE SYNTHASE SUBUNIT HISF/H IGP SYNTHASE SUBUNIT HISF/H"/>
    <property type="match status" value="1"/>
</dbReference>
<dbReference type="Pfam" id="PF00977">
    <property type="entry name" value="His_biosynth"/>
    <property type="match status" value="1"/>
</dbReference>
<dbReference type="SUPFAM" id="SSF51366">
    <property type="entry name" value="Ribulose-phoshate binding barrel"/>
    <property type="match status" value="1"/>
</dbReference>
<evidence type="ECO:0000255" key="1">
    <source>
        <dbReference type="HAMAP-Rule" id="MF_01013"/>
    </source>
</evidence>
<keyword id="KW-0028">Amino-acid biosynthesis</keyword>
<keyword id="KW-0963">Cytoplasm</keyword>
<keyword id="KW-0368">Histidine biosynthesis</keyword>
<keyword id="KW-0456">Lyase</keyword>
<keyword id="KW-1185">Reference proteome</keyword>
<sequence>MALAKRIIPCLDVTAGRVVKGVNFVELRDAGDPVEIARRYDEQGADELTFLDITATSDQRDLILPIIEAVASQVFIPLTVGGGVRAVEDVRRLLNAGADKVSMNSSAVANPQLVRDSTDKYGSQCIVVAIDAKRVSAEGETPRWEVFTHGGRKNTGLDAVEWARRMAELGAGEILLTSMDRDGTKSGFDIALTRAVSDAVSIPVIASGGVGSLQHLADGITQGRADAVLAASIFHYGEHTVGECKRFMADQGISVRL</sequence>
<proteinExistence type="inferred from homology"/>
<organism>
    <name type="scientific">Paraburkholderia phymatum (strain DSM 17167 / CIP 108236 / LMG 21445 / STM815)</name>
    <name type="common">Burkholderia phymatum</name>
    <dbReference type="NCBI Taxonomy" id="391038"/>
    <lineage>
        <taxon>Bacteria</taxon>
        <taxon>Pseudomonadati</taxon>
        <taxon>Pseudomonadota</taxon>
        <taxon>Betaproteobacteria</taxon>
        <taxon>Burkholderiales</taxon>
        <taxon>Burkholderiaceae</taxon>
        <taxon>Paraburkholderia</taxon>
    </lineage>
</organism>
<name>HIS6_PARP8</name>
<comment type="function">
    <text evidence="1">IGPS catalyzes the conversion of PRFAR and glutamine to IGP, AICAR and glutamate. The HisF subunit catalyzes the cyclization activity that produces IGP and AICAR from PRFAR using the ammonia provided by the HisH subunit.</text>
</comment>
<comment type="catalytic activity">
    <reaction evidence="1">
        <text>5-[(5-phospho-1-deoxy-D-ribulos-1-ylimino)methylamino]-1-(5-phospho-beta-D-ribosyl)imidazole-4-carboxamide + L-glutamine = D-erythro-1-(imidazol-4-yl)glycerol 3-phosphate + 5-amino-1-(5-phospho-beta-D-ribosyl)imidazole-4-carboxamide + L-glutamate + H(+)</text>
        <dbReference type="Rhea" id="RHEA:24793"/>
        <dbReference type="ChEBI" id="CHEBI:15378"/>
        <dbReference type="ChEBI" id="CHEBI:29985"/>
        <dbReference type="ChEBI" id="CHEBI:58278"/>
        <dbReference type="ChEBI" id="CHEBI:58359"/>
        <dbReference type="ChEBI" id="CHEBI:58475"/>
        <dbReference type="ChEBI" id="CHEBI:58525"/>
        <dbReference type="EC" id="4.3.2.10"/>
    </reaction>
</comment>
<comment type="pathway">
    <text evidence="1">Amino-acid biosynthesis; L-histidine biosynthesis; L-histidine from 5-phospho-alpha-D-ribose 1-diphosphate: step 5/9.</text>
</comment>
<comment type="subunit">
    <text evidence="1">Heterodimer of HisH and HisF.</text>
</comment>
<comment type="subcellular location">
    <subcellularLocation>
        <location evidence="1">Cytoplasm</location>
    </subcellularLocation>
</comment>
<comment type="similarity">
    <text evidence="1">Belongs to the HisA/HisF family.</text>
</comment>
<gene>
    <name evidence="1" type="primary">hisF</name>
    <name type="ordered locus">Bphy_2753</name>
</gene>